<dbReference type="EC" id="7.1.1.-" evidence="1"/>
<dbReference type="EMBL" id="CP000108">
    <property type="protein sequence ID" value="ABB27910.1"/>
    <property type="molecule type" value="Genomic_DNA"/>
</dbReference>
<dbReference type="SMR" id="Q3ASW5"/>
<dbReference type="STRING" id="340177.Cag_0637"/>
<dbReference type="KEGG" id="cch:Cag_0637"/>
<dbReference type="eggNOG" id="COG0649">
    <property type="taxonomic scope" value="Bacteria"/>
</dbReference>
<dbReference type="HOGENOM" id="CLU_015134_1_2_10"/>
<dbReference type="OrthoDB" id="9801496at2"/>
<dbReference type="GO" id="GO:0005886">
    <property type="term" value="C:plasma membrane"/>
    <property type="evidence" value="ECO:0007669"/>
    <property type="project" value="UniProtKB-SubCell"/>
</dbReference>
<dbReference type="GO" id="GO:0051287">
    <property type="term" value="F:NAD binding"/>
    <property type="evidence" value="ECO:0007669"/>
    <property type="project" value="InterPro"/>
</dbReference>
<dbReference type="GO" id="GO:0050136">
    <property type="term" value="F:NADH:ubiquinone reductase (non-electrogenic) activity"/>
    <property type="evidence" value="ECO:0007669"/>
    <property type="project" value="UniProtKB-UniRule"/>
</dbReference>
<dbReference type="GO" id="GO:0048038">
    <property type="term" value="F:quinone binding"/>
    <property type="evidence" value="ECO:0007669"/>
    <property type="project" value="UniProtKB-KW"/>
</dbReference>
<dbReference type="Gene3D" id="1.10.645.10">
    <property type="entry name" value="Cytochrome-c3 Hydrogenase, chain B"/>
    <property type="match status" value="1"/>
</dbReference>
<dbReference type="HAMAP" id="MF_01358">
    <property type="entry name" value="NDH1_NuoD"/>
    <property type="match status" value="1"/>
</dbReference>
<dbReference type="InterPro" id="IPR001135">
    <property type="entry name" value="NADH_Q_OxRdtase_suD"/>
</dbReference>
<dbReference type="InterPro" id="IPR022885">
    <property type="entry name" value="NDH1_su_D/H"/>
</dbReference>
<dbReference type="InterPro" id="IPR029014">
    <property type="entry name" value="NiFe-Hase_large"/>
</dbReference>
<dbReference type="PANTHER" id="PTHR11993:SF10">
    <property type="entry name" value="NADH DEHYDROGENASE [UBIQUINONE] IRON-SULFUR PROTEIN 2, MITOCHONDRIAL"/>
    <property type="match status" value="1"/>
</dbReference>
<dbReference type="PANTHER" id="PTHR11993">
    <property type="entry name" value="NADH-UBIQUINONE OXIDOREDUCTASE 49 KDA SUBUNIT"/>
    <property type="match status" value="1"/>
</dbReference>
<dbReference type="Pfam" id="PF00346">
    <property type="entry name" value="Complex1_49kDa"/>
    <property type="match status" value="1"/>
</dbReference>
<dbReference type="SUPFAM" id="SSF56762">
    <property type="entry name" value="HydB/Nqo4-like"/>
    <property type="match status" value="1"/>
</dbReference>
<proteinExistence type="inferred from homology"/>
<sequence>MQELEKAVPSSVRVTRQSENLVILEKDLATEQMVLAMGPQHPSTHGVLKLECLTDGEVVTEAEPVLGYLHRCFEKTAENVDYPAVVPFTDRLDYLAAMNSEFAYALTVEKLLDIEIPRRVEFIRILVAELNRIASHLVAIGTYGIDLGAFTPFLFCFRDREIILGLLEWASGARMLYNYVWVGGLAYDVPADFLKRIREFCAYFRPKAKELADLLTSNEIFVKRTHGIGIMPADVAINYGWSGPMLRGSGVEWDLRRNDPYSLYSELDFNVCVPDGKHSVIGDCLSRHLVRAYEMEESLNIIEQCIDKMPSSDGFNSRAAIPKKIRPKAGEVYGRAENPRGELGFYIQSDGKSTKPLRCKARSSCFVNLSAMKDLSKGQLIPDLVAIIGSIDIVLGEVDR</sequence>
<organism>
    <name type="scientific">Chlorobium chlorochromatii (strain CaD3)</name>
    <dbReference type="NCBI Taxonomy" id="340177"/>
    <lineage>
        <taxon>Bacteria</taxon>
        <taxon>Pseudomonadati</taxon>
        <taxon>Chlorobiota</taxon>
        <taxon>Chlorobiia</taxon>
        <taxon>Chlorobiales</taxon>
        <taxon>Chlorobiaceae</taxon>
        <taxon>Chlorobium/Pelodictyon group</taxon>
        <taxon>Chlorobium</taxon>
    </lineage>
</organism>
<reference key="1">
    <citation type="submission" date="2005-08" db="EMBL/GenBank/DDBJ databases">
        <title>Complete sequence of Chlorobium chlorochromatii CaD3.</title>
        <authorList>
            <consortium name="US DOE Joint Genome Institute"/>
            <person name="Copeland A."/>
            <person name="Lucas S."/>
            <person name="Lapidus A."/>
            <person name="Barry K."/>
            <person name="Detter J.C."/>
            <person name="Glavina T."/>
            <person name="Hammon N."/>
            <person name="Israni S."/>
            <person name="Pitluck S."/>
            <person name="Bryant D."/>
            <person name="Schmutz J."/>
            <person name="Larimer F."/>
            <person name="Land M."/>
            <person name="Kyrpides N."/>
            <person name="Ivanova N."/>
            <person name="Richardson P."/>
        </authorList>
    </citation>
    <scope>NUCLEOTIDE SEQUENCE [LARGE SCALE GENOMIC DNA]</scope>
    <source>
        <strain>CaD3</strain>
    </source>
</reference>
<evidence type="ECO:0000255" key="1">
    <source>
        <dbReference type="HAMAP-Rule" id="MF_01358"/>
    </source>
</evidence>
<protein>
    <recommendedName>
        <fullName evidence="1">NADH-quinone oxidoreductase subunit D</fullName>
        <ecNumber evidence="1">7.1.1.-</ecNumber>
    </recommendedName>
    <alternativeName>
        <fullName evidence="1">NADH dehydrogenase I subunit D</fullName>
    </alternativeName>
    <alternativeName>
        <fullName evidence="1">NDH-1 subunit D</fullName>
    </alternativeName>
</protein>
<feature type="chain" id="PRO_0000357794" description="NADH-quinone oxidoreductase subunit D">
    <location>
        <begin position="1"/>
        <end position="400"/>
    </location>
</feature>
<name>NUOD_CHLCH</name>
<keyword id="KW-0997">Cell inner membrane</keyword>
<keyword id="KW-1003">Cell membrane</keyword>
<keyword id="KW-0472">Membrane</keyword>
<keyword id="KW-0520">NAD</keyword>
<keyword id="KW-0874">Quinone</keyword>
<keyword id="KW-1278">Translocase</keyword>
<keyword id="KW-0813">Transport</keyword>
<accession>Q3ASW5</accession>
<gene>
    <name evidence="1" type="primary">nuoD</name>
    <name type="ordered locus">Cag_0637</name>
</gene>
<comment type="function">
    <text evidence="1">NDH-1 shuttles electrons from NADH, via FMN and iron-sulfur (Fe-S) centers, to quinones in the respiratory chain. The immediate electron acceptor for the enzyme in this species is believed to be a menaquinone. Couples the redox reaction to proton translocation (for every two electrons transferred, four hydrogen ions are translocated across the cytoplasmic membrane), and thus conserves the redox energy in a proton gradient.</text>
</comment>
<comment type="catalytic activity">
    <reaction evidence="1">
        <text>a quinone + NADH + 5 H(+)(in) = a quinol + NAD(+) + 4 H(+)(out)</text>
        <dbReference type="Rhea" id="RHEA:57888"/>
        <dbReference type="ChEBI" id="CHEBI:15378"/>
        <dbReference type="ChEBI" id="CHEBI:24646"/>
        <dbReference type="ChEBI" id="CHEBI:57540"/>
        <dbReference type="ChEBI" id="CHEBI:57945"/>
        <dbReference type="ChEBI" id="CHEBI:132124"/>
    </reaction>
</comment>
<comment type="subunit">
    <text evidence="1">NDH-1 is composed of 14 different subunits. Subunits NuoB, C, D, E, F, and G constitute the peripheral sector of the complex.</text>
</comment>
<comment type="subcellular location">
    <subcellularLocation>
        <location evidence="1">Cell inner membrane</location>
        <topology evidence="1">Peripheral membrane protein</topology>
        <orientation evidence="1">Cytoplasmic side</orientation>
    </subcellularLocation>
</comment>
<comment type="similarity">
    <text evidence="1">Belongs to the complex I 49 kDa subunit family.</text>
</comment>